<proteinExistence type="inferred from homology"/>
<reference key="1">
    <citation type="journal article" date="2005" name="Nature">
        <title>Sequencing of Aspergillus nidulans and comparative analysis with A. fumigatus and A. oryzae.</title>
        <authorList>
            <person name="Galagan J.E."/>
            <person name="Calvo S.E."/>
            <person name="Cuomo C."/>
            <person name="Ma L.-J."/>
            <person name="Wortman J.R."/>
            <person name="Batzoglou S."/>
            <person name="Lee S.-I."/>
            <person name="Bastuerkmen M."/>
            <person name="Spevak C.C."/>
            <person name="Clutterbuck J."/>
            <person name="Kapitonov V."/>
            <person name="Jurka J."/>
            <person name="Scazzocchio C."/>
            <person name="Farman M.L."/>
            <person name="Butler J."/>
            <person name="Purcell S."/>
            <person name="Harris S."/>
            <person name="Braus G.H."/>
            <person name="Draht O."/>
            <person name="Busch S."/>
            <person name="D'Enfert C."/>
            <person name="Bouchier C."/>
            <person name="Goldman G.H."/>
            <person name="Bell-Pedersen D."/>
            <person name="Griffiths-Jones S."/>
            <person name="Doonan J.H."/>
            <person name="Yu J."/>
            <person name="Vienken K."/>
            <person name="Pain A."/>
            <person name="Freitag M."/>
            <person name="Selker E.U."/>
            <person name="Archer D.B."/>
            <person name="Penalva M.A."/>
            <person name="Oakley B.R."/>
            <person name="Momany M."/>
            <person name="Tanaka T."/>
            <person name="Kumagai T."/>
            <person name="Asai K."/>
            <person name="Machida M."/>
            <person name="Nierman W.C."/>
            <person name="Denning D.W."/>
            <person name="Caddick M.X."/>
            <person name="Hynes M."/>
            <person name="Paoletti M."/>
            <person name="Fischer R."/>
            <person name="Miller B.L."/>
            <person name="Dyer P.S."/>
            <person name="Sachs M.S."/>
            <person name="Osmani S.A."/>
            <person name="Birren B.W."/>
        </authorList>
    </citation>
    <scope>NUCLEOTIDE SEQUENCE [LARGE SCALE GENOMIC DNA]</scope>
    <source>
        <strain>FGSC A4 / ATCC 38163 / CBS 112.46 / NRRL 194 / M139</strain>
    </source>
</reference>
<reference key="2">
    <citation type="journal article" date="2009" name="Fungal Genet. Biol.">
        <title>The 2008 update of the Aspergillus nidulans genome annotation: a community effort.</title>
        <authorList>
            <person name="Wortman J.R."/>
            <person name="Gilsenan J.M."/>
            <person name="Joardar V."/>
            <person name="Deegan J."/>
            <person name="Clutterbuck J."/>
            <person name="Andersen M.R."/>
            <person name="Archer D."/>
            <person name="Bencina M."/>
            <person name="Braus G."/>
            <person name="Coutinho P."/>
            <person name="von Dohren H."/>
            <person name="Doonan J."/>
            <person name="Driessen A.J."/>
            <person name="Durek P."/>
            <person name="Espeso E."/>
            <person name="Fekete E."/>
            <person name="Flipphi M."/>
            <person name="Estrada C.G."/>
            <person name="Geysens S."/>
            <person name="Goldman G."/>
            <person name="de Groot P.W."/>
            <person name="Hansen K."/>
            <person name="Harris S.D."/>
            <person name="Heinekamp T."/>
            <person name="Helmstaedt K."/>
            <person name="Henrissat B."/>
            <person name="Hofmann G."/>
            <person name="Homan T."/>
            <person name="Horio T."/>
            <person name="Horiuchi H."/>
            <person name="James S."/>
            <person name="Jones M."/>
            <person name="Karaffa L."/>
            <person name="Karanyi Z."/>
            <person name="Kato M."/>
            <person name="Keller N."/>
            <person name="Kelly D.E."/>
            <person name="Kiel J.A."/>
            <person name="Kim J.M."/>
            <person name="van der Klei I.J."/>
            <person name="Klis F.M."/>
            <person name="Kovalchuk A."/>
            <person name="Krasevec N."/>
            <person name="Kubicek C.P."/>
            <person name="Liu B."/>
            <person name="Maccabe A."/>
            <person name="Meyer V."/>
            <person name="Mirabito P."/>
            <person name="Miskei M."/>
            <person name="Mos M."/>
            <person name="Mullins J."/>
            <person name="Nelson D.R."/>
            <person name="Nielsen J."/>
            <person name="Oakley B.R."/>
            <person name="Osmani S.A."/>
            <person name="Pakula T."/>
            <person name="Paszewski A."/>
            <person name="Paulsen I."/>
            <person name="Pilsyk S."/>
            <person name="Pocsi I."/>
            <person name="Punt P.J."/>
            <person name="Ram A.F."/>
            <person name="Ren Q."/>
            <person name="Robellet X."/>
            <person name="Robson G."/>
            <person name="Seiboth B."/>
            <person name="van Solingen P."/>
            <person name="Specht T."/>
            <person name="Sun J."/>
            <person name="Taheri-Talesh N."/>
            <person name="Takeshita N."/>
            <person name="Ussery D."/>
            <person name="vanKuyk P.A."/>
            <person name="Visser H."/>
            <person name="van de Vondervoort P.J."/>
            <person name="de Vries R.P."/>
            <person name="Walton J."/>
            <person name="Xiang X."/>
            <person name="Xiong Y."/>
            <person name="Zeng A.P."/>
            <person name="Brandt B.W."/>
            <person name="Cornell M.J."/>
            <person name="van den Hondel C.A."/>
            <person name="Visser J."/>
            <person name="Oliver S.G."/>
            <person name="Turner G."/>
        </authorList>
    </citation>
    <scope>GENOME REANNOTATION</scope>
    <source>
        <strain>FGSC A4 / ATCC 38163 / CBS 112.46 / NRRL 194 / M139</strain>
    </source>
</reference>
<gene>
    <name type="primary">ded1</name>
    <name type="ORF">AN10557</name>
</gene>
<organism>
    <name type="scientific">Emericella nidulans (strain FGSC A4 / ATCC 38163 / CBS 112.46 / NRRL 194 / M139)</name>
    <name type="common">Aspergillus nidulans</name>
    <dbReference type="NCBI Taxonomy" id="227321"/>
    <lineage>
        <taxon>Eukaryota</taxon>
        <taxon>Fungi</taxon>
        <taxon>Dikarya</taxon>
        <taxon>Ascomycota</taxon>
        <taxon>Pezizomycotina</taxon>
        <taxon>Eurotiomycetes</taxon>
        <taxon>Eurotiomycetidae</taxon>
        <taxon>Eurotiales</taxon>
        <taxon>Aspergillaceae</taxon>
        <taxon>Aspergillus</taxon>
        <taxon>Aspergillus subgen. Nidulantes</taxon>
    </lineage>
</organism>
<sequence length="668" mass="71239">MADGLNMGSLTLNDSQHAPAPGGPPSGGRAAYIPPHLRQRQVNANGDGASAPPPGPTGGSWGGPRGPRGGNWANANAPDFNPRGPNGNTNTNSGWTATEAGRPLFNPNAYGNPGHGGGYAGASARGSGDGQWRDGKHIPGPPNPRLERELFGVPNDPTKQNTGINFANYDDIPVEASGHDVPEPVNTFTNPPLDDHLISNIALARYQTPTPVQKYSIPIVMNGRDLMACAQTGSGKTGGFLFPILSQAYQNGPAAPPPSAAGQFGRQRKAYPTSLILAPTRELVSQIFDEARKFAYRSWVRPCVVYGGADIGSQLRQIERGCDLLVATPGRLVDLIERGRISLVNIKYLILDEADRMLDMGFEPQIRRIVEGEDMPNVNDRQTLMFSATFPRDIQMLARDFLKDYVFLSVGRVGSTSENITQKVEYVEDHDKRSVLLDILHTHGTTGLTLIFVETKRMADALSEFLINQRFPATAIHGDRTQRERERALEMFRSGRYPILVATAVAARGLDIPNVTHVINYDLPTDIDDYVHRIGRTGRAGNTGIATAFFNRGNRGVVRDLIDLLKEAHQEVPSFLESIAREGSGYGGRGGRGGRGRGANATRDMRRMGGGMGGPPSYGGGSGFGAPASNYGGGYGGAPSYGGAGYGGGYGGGGYGNPSGSTGPSSWW</sequence>
<comment type="function">
    <text evidence="1">ATP-binding RNA helicase involved in translation initiation. Remodels RNA in response to ADP and ATP concentrations by facilitating disruption, but also formation of RNA duplexes (By similarity).</text>
</comment>
<comment type="catalytic activity">
    <reaction>
        <text>ATP + H2O = ADP + phosphate + H(+)</text>
        <dbReference type="Rhea" id="RHEA:13065"/>
        <dbReference type="ChEBI" id="CHEBI:15377"/>
        <dbReference type="ChEBI" id="CHEBI:15378"/>
        <dbReference type="ChEBI" id="CHEBI:30616"/>
        <dbReference type="ChEBI" id="CHEBI:43474"/>
        <dbReference type="ChEBI" id="CHEBI:456216"/>
        <dbReference type="EC" id="3.6.4.13"/>
    </reaction>
</comment>
<comment type="subcellular location">
    <subcellularLocation>
        <location evidence="1">Cytoplasm</location>
    </subcellularLocation>
</comment>
<comment type="domain">
    <text>The Q motif is unique to and characteristic of the DEAD box family of RNA helicases and controls ATP binding and hydrolysis.</text>
</comment>
<comment type="similarity">
    <text evidence="5">Belongs to the DEAD box helicase family. DDX3/DED1 subfamily.</text>
</comment>
<comment type="sequence caution" evidence="5">
    <conflict type="erroneous gene model prediction">
        <sequence resource="EMBL-CDS" id="EAA60231"/>
    </conflict>
    <text>The predicted gene AN4466 has been split into 2 genes: AN10557 and AN10560.</text>
</comment>
<name>DED1_EMENI</name>
<protein>
    <recommendedName>
        <fullName>ATP-dependent RNA helicase ded1</fullName>
        <ecNumber>3.6.4.13</ecNumber>
    </recommendedName>
</protein>
<accession>C8V8H4</accession>
<accession>P0C2M6</accession>
<accession>Q5B4R4</accession>
<dbReference type="EC" id="3.6.4.13"/>
<dbReference type="EMBL" id="AACD01000077">
    <property type="protein sequence ID" value="EAA60231.1"/>
    <property type="status" value="ALT_SEQ"/>
    <property type="molecule type" value="Genomic_DNA"/>
</dbReference>
<dbReference type="EMBL" id="BN001303">
    <property type="protein sequence ID" value="CBF77461.1"/>
    <property type="molecule type" value="Genomic_DNA"/>
</dbReference>
<dbReference type="SMR" id="C8V8H4"/>
<dbReference type="FunCoup" id="C8V8H4">
    <property type="interactions" value="1258"/>
</dbReference>
<dbReference type="STRING" id="227321.C8V8H4"/>
<dbReference type="EnsemblFungi" id="CBF77461">
    <property type="protein sequence ID" value="CBF77461"/>
    <property type="gene ID" value="ANIA_10557"/>
</dbReference>
<dbReference type="VEuPathDB" id="FungiDB:AN10557"/>
<dbReference type="eggNOG" id="KOG0335">
    <property type="taxonomic scope" value="Eukaryota"/>
</dbReference>
<dbReference type="HOGENOM" id="CLU_003735_0_0_1"/>
<dbReference type="InParanoid" id="C8V8H4"/>
<dbReference type="OMA" id="CYRSWVR"/>
<dbReference type="OrthoDB" id="196131at2759"/>
<dbReference type="Proteomes" id="UP000000560">
    <property type="component" value="Chromosome III"/>
</dbReference>
<dbReference type="GO" id="GO:0010494">
    <property type="term" value="C:cytoplasmic stress granule"/>
    <property type="evidence" value="ECO:0007669"/>
    <property type="project" value="EnsemblFungi"/>
</dbReference>
<dbReference type="GO" id="GO:0005634">
    <property type="term" value="C:nucleus"/>
    <property type="evidence" value="ECO:0000318"/>
    <property type="project" value="GO_Central"/>
</dbReference>
<dbReference type="GO" id="GO:0005681">
    <property type="term" value="C:spliceosomal complex"/>
    <property type="evidence" value="ECO:0007669"/>
    <property type="project" value="EnsemblFungi"/>
</dbReference>
<dbReference type="GO" id="GO:0005524">
    <property type="term" value="F:ATP binding"/>
    <property type="evidence" value="ECO:0007669"/>
    <property type="project" value="UniProtKB-KW"/>
</dbReference>
<dbReference type="GO" id="GO:0016887">
    <property type="term" value="F:ATP hydrolysis activity"/>
    <property type="evidence" value="ECO:0007669"/>
    <property type="project" value="RHEA"/>
</dbReference>
<dbReference type="GO" id="GO:0031370">
    <property type="term" value="F:eukaryotic initiation factor 4G binding"/>
    <property type="evidence" value="ECO:0007669"/>
    <property type="project" value="EnsemblFungi"/>
</dbReference>
<dbReference type="GO" id="GO:0051880">
    <property type="term" value="F:G-quadruplex DNA binding"/>
    <property type="evidence" value="ECO:0007669"/>
    <property type="project" value="EnsemblFungi"/>
</dbReference>
<dbReference type="GO" id="GO:0002151">
    <property type="term" value="F:G-quadruplex RNA binding"/>
    <property type="evidence" value="ECO:0007669"/>
    <property type="project" value="EnsemblFungi"/>
</dbReference>
<dbReference type="GO" id="GO:0003729">
    <property type="term" value="F:mRNA binding"/>
    <property type="evidence" value="ECO:0000318"/>
    <property type="project" value="GO_Central"/>
</dbReference>
<dbReference type="GO" id="GO:0003724">
    <property type="term" value="F:RNA helicase activity"/>
    <property type="evidence" value="ECO:0000318"/>
    <property type="project" value="GO_Central"/>
</dbReference>
<dbReference type="GO" id="GO:0033592">
    <property type="term" value="F:RNA strand annealing activity"/>
    <property type="evidence" value="ECO:0007669"/>
    <property type="project" value="EnsemblFungi"/>
</dbReference>
<dbReference type="GO" id="GO:0003743">
    <property type="term" value="F:translation initiation factor activity"/>
    <property type="evidence" value="ECO:0007669"/>
    <property type="project" value="UniProtKB-KW"/>
</dbReference>
<dbReference type="GO" id="GO:0097308">
    <property type="term" value="P:cellular response to farnesol"/>
    <property type="evidence" value="ECO:0000270"/>
    <property type="project" value="AspGD"/>
</dbReference>
<dbReference type="GO" id="GO:0002183">
    <property type="term" value="P:cytoplasmic translational initiation"/>
    <property type="evidence" value="ECO:0007669"/>
    <property type="project" value="EnsemblFungi"/>
</dbReference>
<dbReference type="GO" id="GO:1990625">
    <property type="term" value="P:negative regulation of cytoplasmic translational initiation in response to stress"/>
    <property type="evidence" value="ECO:0007669"/>
    <property type="project" value="EnsemblFungi"/>
</dbReference>
<dbReference type="GO" id="GO:1901195">
    <property type="term" value="P:positive regulation of formation of translation preinitiation complex"/>
    <property type="evidence" value="ECO:0007669"/>
    <property type="project" value="EnsemblFungi"/>
</dbReference>
<dbReference type="GO" id="GO:0031047">
    <property type="term" value="P:regulatory ncRNA-mediated gene silencing"/>
    <property type="evidence" value="ECO:0007669"/>
    <property type="project" value="EnsemblFungi"/>
</dbReference>
<dbReference type="GO" id="GO:0000390">
    <property type="term" value="P:spliceosomal complex disassembly"/>
    <property type="evidence" value="ECO:0007669"/>
    <property type="project" value="EnsemblFungi"/>
</dbReference>
<dbReference type="CDD" id="cd18787">
    <property type="entry name" value="SF2_C_DEAD"/>
    <property type="match status" value="1"/>
</dbReference>
<dbReference type="FunFam" id="3.40.50.300:FF:000160">
    <property type="entry name" value="ATP-dependent RNA helicase DDX3X"/>
    <property type="match status" value="1"/>
</dbReference>
<dbReference type="FunFam" id="3.40.50.300:FF:000008">
    <property type="entry name" value="ATP-dependent RNA helicase RhlB"/>
    <property type="match status" value="1"/>
</dbReference>
<dbReference type="Gene3D" id="3.40.50.300">
    <property type="entry name" value="P-loop containing nucleotide triphosphate hydrolases"/>
    <property type="match status" value="2"/>
</dbReference>
<dbReference type="InterPro" id="IPR011545">
    <property type="entry name" value="DEAD/DEAH_box_helicase_dom"/>
</dbReference>
<dbReference type="InterPro" id="IPR014001">
    <property type="entry name" value="Helicase_ATP-bd"/>
</dbReference>
<dbReference type="InterPro" id="IPR001650">
    <property type="entry name" value="Helicase_C-like"/>
</dbReference>
<dbReference type="InterPro" id="IPR027417">
    <property type="entry name" value="P-loop_NTPase"/>
</dbReference>
<dbReference type="InterPro" id="IPR000629">
    <property type="entry name" value="RNA-helicase_DEAD-box_CS"/>
</dbReference>
<dbReference type="InterPro" id="IPR014014">
    <property type="entry name" value="RNA_helicase_DEAD_Q_motif"/>
</dbReference>
<dbReference type="PANTHER" id="PTHR47958">
    <property type="entry name" value="ATP-DEPENDENT RNA HELICASE DBP3"/>
    <property type="match status" value="1"/>
</dbReference>
<dbReference type="Pfam" id="PF00270">
    <property type="entry name" value="DEAD"/>
    <property type="match status" value="1"/>
</dbReference>
<dbReference type="Pfam" id="PF00271">
    <property type="entry name" value="Helicase_C"/>
    <property type="match status" value="1"/>
</dbReference>
<dbReference type="SMART" id="SM00487">
    <property type="entry name" value="DEXDc"/>
    <property type="match status" value="1"/>
</dbReference>
<dbReference type="SMART" id="SM00490">
    <property type="entry name" value="HELICc"/>
    <property type="match status" value="1"/>
</dbReference>
<dbReference type="SUPFAM" id="SSF52540">
    <property type="entry name" value="P-loop containing nucleoside triphosphate hydrolases"/>
    <property type="match status" value="1"/>
</dbReference>
<dbReference type="PROSITE" id="PS00039">
    <property type="entry name" value="DEAD_ATP_HELICASE"/>
    <property type="match status" value="1"/>
</dbReference>
<dbReference type="PROSITE" id="PS51192">
    <property type="entry name" value="HELICASE_ATP_BIND_1"/>
    <property type="match status" value="1"/>
</dbReference>
<dbReference type="PROSITE" id="PS51194">
    <property type="entry name" value="HELICASE_CTER"/>
    <property type="match status" value="1"/>
</dbReference>
<dbReference type="PROSITE" id="PS51195">
    <property type="entry name" value="Q_MOTIF"/>
    <property type="match status" value="1"/>
</dbReference>
<feature type="chain" id="PRO_0000281690" description="ATP-dependent RNA helicase ded1">
    <location>
        <begin position="1"/>
        <end position="668"/>
    </location>
</feature>
<feature type="domain" description="Helicase ATP-binding" evidence="2">
    <location>
        <begin position="217"/>
        <end position="408"/>
    </location>
</feature>
<feature type="domain" description="Helicase C-terminal" evidence="3">
    <location>
        <begin position="419"/>
        <end position="580"/>
    </location>
</feature>
<feature type="region of interest" description="Disordered" evidence="4">
    <location>
        <begin position="1"/>
        <end position="96"/>
    </location>
</feature>
<feature type="region of interest" description="Disordered" evidence="4">
    <location>
        <begin position="112"/>
        <end position="144"/>
    </location>
</feature>
<feature type="region of interest" description="Disordered" evidence="4">
    <location>
        <begin position="581"/>
        <end position="603"/>
    </location>
</feature>
<feature type="short sequence motif" description="Q motif">
    <location>
        <begin position="186"/>
        <end position="214"/>
    </location>
</feature>
<feature type="short sequence motif" description="DEAD box">
    <location>
        <begin position="352"/>
        <end position="355"/>
    </location>
</feature>
<feature type="compositionally biased region" description="Gly residues" evidence="4">
    <location>
        <begin position="57"/>
        <end position="69"/>
    </location>
</feature>
<feature type="compositionally biased region" description="Low complexity" evidence="4">
    <location>
        <begin position="81"/>
        <end position="92"/>
    </location>
</feature>
<feature type="compositionally biased region" description="Gly residues" evidence="4">
    <location>
        <begin position="584"/>
        <end position="597"/>
    </location>
</feature>
<feature type="binding site" evidence="2">
    <location>
        <begin position="230"/>
        <end position="237"/>
    </location>
    <ligand>
        <name>ATP</name>
        <dbReference type="ChEBI" id="CHEBI:30616"/>
    </ligand>
</feature>
<keyword id="KW-0067">ATP-binding</keyword>
<keyword id="KW-0963">Cytoplasm</keyword>
<keyword id="KW-0347">Helicase</keyword>
<keyword id="KW-0378">Hydrolase</keyword>
<keyword id="KW-0396">Initiation factor</keyword>
<keyword id="KW-0547">Nucleotide-binding</keyword>
<keyword id="KW-0648">Protein biosynthesis</keyword>
<keyword id="KW-1185">Reference proteome</keyword>
<keyword id="KW-0694">RNA-binding</keyword>
<evidence type="ECO:0000250" key="1"/>
<evidence type="ECO:0000255" key="2">
    <source>
        <dbReference type="PROSITE-ProRule" id="PRU00541"/>
    </source>
</evidence>
<evidence type="ECO:0000255" key="3">
    <source>
        <dbReference type="PROSITE-ProRule" id="PRU00542"/>
    </source>
</evidence>
<evidence type="ECO:0000256" key="4">
    <source>
        <dbReference type="SAM" id="MobiDB-lite"/>
    </source>
</evidence>
<evidence type="ECO:0000305" key="5"/>